<evidence type="ECO:0000255" key="1"/>
<evidence type="ECO:0000255" key="2">
    <source>
        <dbReference type="PROSITE-ProRule" id="PRU00258"/>
    </source>
</evidence>
<evidence type="ECO:0000255" key="3">
    <source>
        <dbReference type="PROSITE-ProRule" id="PRU01348"/>
    </source>
</evidence>
<evidence type="ECO:0000255" key="4">
    <source>
        <dbReference type="PROSITE-ProRule" id="PRU01363"/>
    </source>
</evidence>
<evidence type="ECO:0000255" key="5">
    <source>
        <dbReference type="PROSITE-ProRule" id="PRU10022"/>
    </source>
</evidence>
<evidence type="ECO:0000256" key="6">
    <source>
        <dbReference type="SAM" id="MobiDB-lite"/>
    </source>
</evidence>
<evidence type="ECO:0000269" key="7">
    <source>
    </source>
</evidence>
<evidence type="ECO:0000303" key="8">
    <source>
    </source>
</evidence>
<evidence type="ECO:0000305" key="9"/>
<evidence type="ECO:0000305" key="10">
    <source>
    </source>
</evidence>
<reference key="1">
    <citation type="journal article" date="2020" name="Front. Microbiol.">
        <title>Discovery of pyranoviolin A and its biosynthetic gene cluster in Aspergillus violaceofuscus.</title>
        <authorList>
            <person name="Wei X."/>
            <person name="Chen L."/>
            <person name="Tang J.W."/>
            <person name="Matsuda Y."/>
        </authorList>
    </citation>
    <scope>NUCLEOTIDE SEQUENCE [GENOMIC DNA]</scope>
    <scope>DOMAIN</scope>
    <scope>FUNCTION</scope>
    <scope>DISRUPTION PHENOTYPE</scope>
    <scope>PATHWAY</scope>
</reference>
<reference key="2">
    <citation type="submission" date="2018-02" db="EMBL/GenBank/DDBJ databases">
        <title>The genomes of Aspergillus section Nigri reveals drivers in fungal speciation.</title>
        <authorList>
            <consortium name="DOE Joint Genome Institute"/>
            <person name="Vesth T.C."/>
            <person name="Nybo J."/>
            <person name="Theobald S."/>
            <person name="Brandl J."/>
            <person name="Frisvad J.C."/>
            <person name="Nielsen K.F."/>
            <person name="Lyhne E.K."/>
            <person name="Kogle M.E."/>
            <person name="Kuo A."/>
            <person name="Riley R."/>
            <person name="Clum A."/>
            <person name="Nolan M."/>
            <person name="Lipzen A."/>
            <person name="Salamov A."/>
            <person name="Henrissat B."/>
            <person name="Wiebenga A."/>
            <person name="De vries R.P."/>
            <person name="Grigoriev I.V."/>
            <person name="Mortensen U.H."/>
            <person name="Andersen M.R."/>
            <person name="Baker S.E."/>
        </authorList>
    </citation>
    <scope>NUCLEOTIDE SEQUENCE [LARGE SCALE GENOMIC DNA]</scope>
    <source>
        <strain>CBS 115571</strain>
    </source>
</reference>
<gene>
    <name evidence="8" type="primary">pyvA</name>
    <name type="ORF">BO99DRAFT_417425</name>
</gene>
<accession>A0A2V5GX43</accession>
<accession>A0A7M4B2X1</accession>
<organism>
    <name type="scientific">Aspergillus violaceofuscus (strain CBS 115571)</name>
    <dbReference type="NCBI Taxonomy" id="1450538"/>
    <lineage>
        <taxon>Eukaryota</taxon>
        <taxon>Fungi</taxon>
        <taxon>Dikarya</taxon>
        <taxon>Ascomycota</taxon>
        <taxon>Pezizomycotina</taxon>
        <taxon>Eurotiomycetes</taxon>
        <taxon>Eurotiomycetidae</taxon>
        <taxon>Eurotiales</taxon>
        <taxon>Aspergillaceae</taxon>
        <taxon>Aspergillus</taxon>
    </lineage>
</organism>
<proteinExistence type="inferred from homology"/>
<name>PYVA_ASPV1</name>
<comment type="function">
    <text evidence="7 10">Hybrid PKS-NRPS synthetase; part of the gene cluster that mediates the biosynthesis of pyranoviolin A, a pyranonigrin analog with a C-3 methoxy group (PubMed:33117309). Initially, the PKS portion of pyvA synthesizes C-10 carbon chain from 5 molecules of malonyl-CoA, which is then condensed with the thiolation (T) domain-bound glycine activated by the adenylation (A) domain (PubMed:33117309). The subsequent chain release by Dieckmann condensation (DKC) could be catalyzed by the TE domain present at the C-terminus of pyvA and/or the alpha/beta hydrolase pyvD, installing the tetramic acid moiety (Probable). The FAD-dependent monooxygenase pyvC next epoxidizes one of the olefins of the polyketide part, and the epoxide ring-opening induces the dihydro-gamma-pyrone ring formation (Probable). The cytochrome P450 monooxygeanse pyvB would be responsible for the 2 consecutive reactions, in which the dihydro-gamma-pyrone is oxidized to gamma-pyrone and C-7 is hydroxylated to yield pyranonigrin F (Probable). Finally, the O-methyltransferase pyvH methylates the C-3 hydroxy group to complete the biosynthesis (Probable).</text>
</comment>
<comment type="pathway">
    <text evidence="7">Secondary metabolite biosynthesis.</text>
</comment>
<comment type="domain">
    <text evidence="10">The N-terminal part acts as a polyketide synthase and includes a ketosynthase (KS) domain that catalyzes repeated decarboxylative condensation to elongate the polyketide backbone; a malonyl-CoA:ACP transacylase (MAT) domain that selects and transfers the extender unit malonyl-CoA; a dehydratase (DH) domain that reduces hydroxyl groups to enoyl groups; an enoylreductase (ER) domain that reduces enoyl groups to alkyl group; a ketoreductase (KR) domain that catalyzes beta-ketoreduction steps; and an acyl-carrier protein (ACP) that serves as the tether of the growing and completed polyketide via its phosphopantetheinyl arm.</text>
</comment>
<comment type="domain">
    <text evidence="10">The C-terminal part acts as an NRP synthetase composed of discrete domains (adenylation (A), thiolation (T) or peptidyl carrier protein (PCP) and condensation (C) domains) which when grouped together are referred to as a single module. Each module is responsible for the recognition (via the A domain) and incorporation of a single amino acid into the growing peptide product. PynA contains one module and terminates in a thioesterase domain (TE) that releases the newly synthesized peptide from the enzyme.</text>
</comment>
<comment type="disruption phenotype">
    <text evidence="7">Completely abolished the production of pyranoviolin A.</text>
</comment>
<comment type="similarity">
    <text evidence="9">In the C-terminal section; belongs to the NRP synthetase family.</text>
</comment>
<comment type="sequence caution" evidence="9">
    <conflict type="erroneous initiation">
        <sequence resource="EMBL-CDS" id="FAA01291"/>
    </conflict>
    <text>Extended N-terminus.</text>
</comment>
<keyword id="KW-0012">Acyltransferase</keyword>
<keyword id="KW-0436">Ligase</keyword>
<keyword id="KW-0511">Multifunctional enzyme</keyword>
<keyword id="KW-0521">NADP</keyword>
<keyword id="KW-0596">Phosphopantetheine</keyword>
<keyword id="KW-0597">Phosphoprotein</keyword>
<keyword id="KW-1185">Reference proteome</keyword>
<keyword id="KW-0808">Transferase</keyword>
<dbReference type="EC" id="2.3.1.-" evidence="7"/>
<dbReference type="EC" id="6.3.2.-" evidence="7"/>
<dbReference type="EMBL" id="BR001648">
    <property type="protein sequence ID" value="FAA01291.1"/>
    <property type="status" value="ALT_INIT"/>
    <property type="molecule type" value="Genomic_DNA"/>
</dbReference>
<dbReference type="EMBL" id="KZ825234">
    <property type="protein sequence ID" value="PYI13694.1"/>
    <property type="molecule type" value="Genomic_DNA"/>
</dbReference>
<dbReference type="SMR" id="A0A2V5GX43"/>
<dbReference type="STRING" id="1450538.A0A2V5GX43"/>
<dbReference type="OMA" id="STWSVPH"/>
<dbReference type="Proteomes" id="UP000249829">
    <property type="component" value="Unassembled WGS sequence"/>
</dbReference>
<dbReference type="GO" id="GO:0004315">
    <property type="term" value="F:3-oxoacyl-[acyl-carrier-protein] synthase activity"/>
    <property type="evidence" value="ECO:0007669"/>
    <property type="project" value="InterPro"/>
</dbReference>
<dbReference type="GO" id="GO:0004312">
    <property type="term" value="F:fatty acid synthase activity"/>
    <property type="evidence" value="ECO:0007669"/>
    <property type="project" value="TreeGrafter"/>
</dbReference>
<dbReference type="GO" id="GO:0016874">
    <property type="term" value="F:ligase activity"/>
    <property type="evidence" value="ECO:0007669"/>
    <property type="project" value="UniProtKB-KW"/>
</dbReference>
<dbReference type="GO" id="GO:0016491">
    <property type="term" value="F:oxidoreductase activity"/>
    <property type="evidence" value="ECO:0007669"/>
    <property type="project" value="InterPro"/>
</dbReference>
<dbReference type="GO" id="GO:0031177">
    <property type="term" value="F:phosphopantetheine binding"/>
    <property type="evidence" value="ECO:0007669"/>
    <property type="project" value="InterPro"/>
</dbReference>
<dbReference type="GO" id="GO:0006633">
    <property type="term" value="P:fatty acid biosynthetic process"/>
    <property type="evidence" value="ECO:0007669"/>
    <property type="project" value="InterPro"/>
</dbReference>
<dbReference type="GO" id="GO:0044550">
    <property type="term" value="P:secondary metabolite biosynthetic process"/>
    <property type="evidence" value="ECO:0007669"/>
    <property type="project" value="TreeGrafter"/>
</dbReference>
<dbReference type="CDD" id="cd05930">
    <property type="entry name" value="A_NRPS"/>
    <property type="match status" value="1"/>
</dbReference>
<dbReference type="CDD" id="cd05195">
    <property type="entry name" value="enoyl_red"/>
    <property type="match status" value="1"/>
</dbReference>
<dbReference type="CDD" id="cd00833">
    <property type="entry name" value="PKS"/>
    <property type="match status" value="1"/>
</dbReference>
<dbReference type="FunFam" id="3.40.50.720:FF:000209">
    <property type="entry name" value="Polyketide synthase Pks12"/>
    <property type="match status" value="1"/>
</dbReference>
<dbReference type="FunFam" id="3.40.366.10:FF:000002">
    <property type="entry name" value="Probable polyketide synthase 2"/>
    <property type="match status" value="1"/>
</dbReference>
<dbReference type="Gene3D" id="3.30.300.30">
    <property type="match status" value="1"/>
</dbReference>
<dbReference type="Gene3D" id="3.30.70.3290">
    <property type="match status" value="1"/>
</dbReference>
<dbReference type="Gene3D" id="3.40.47.10">
    <property type="match status" value="1"/>
</dbReference>
<dbReference type="Gene3D" id="1.10.1200.10">
    <property type="entry name" value="ACP-like"/>
    <property type="match status" value="2"/>
</dbReference>
<dbReference type="Gene3D" id="3.30.559.10">
    <property type="entry name" value="Chloramphenicol acetyltransferase-like domain"/>
    <property type="match status" value="1"/>
</dbReference>
<dbReference type="Gene3D" id="3.40.366.10">
    <property type="entry name" value="Malonyl-Coenzyme A Acyl Carrier Protein, domain 2"/>
    <property type="match status" value="1"/>
</dbReference>
<dbReference type="Gene3D" id="3.90.180.10">
    <property type="entry name" value="Medium-chain alcohol dehydrogenases, catalytic domain"/>
    <property type="match status" value="1"/>
</dbReference>
<dbReference type="Gene3D" id="3.40.50.12780">
    <property type="entry name" value="N-terminal domain of ligase-like"/>
    <property type="match status" value="1"/>
</dbReference>
<dbReference type="Gene3D" id="3.40.50.720">
    <property type="entry name" value="NAD(P)-binding Rossmann-like Domain"/>
    <property type="match status" value="3"/>
</dbReference>
<dbReference type="Gene3D" id="3.30.559.30">
    <property type="entry name" value="Nonribosomal peptide synthetase, condensation domain"/>
    <property type="match status" value="1"/>
</dbReference>
<dbReference type="Gene3D" id="3.10.129.110">
    <property type="entry name" value="Polyketide synthase dehydratase"/>
    <property type="match status" value="1"/>
</dbReference>
<dbReference type="InterPro" id="IPR010071">
    <property type="entry name" value="AA_adenyl_dom"/>
</dbReference>
<dbReference type="InterPro" id="IPR001227">
    <property type="entry name" value="Ac_transferase_dom_sf"/>
</dbReference>
<dbReference type="InterPro" id="IPR036736">
    <property type="entry name" value="ACP-like_sf"/>
</dbReference>
<dbReference type="InterPro" id="IPR014043">
    <property type="entry name" value="Acyl_transferase_dom"/>
</dbReference>
<dbReference type="InterPro" id="IPR016035">
    <property type="entry name" value="Acyl_Trfase/lysoPLipase"/>
</dbReference>
<dbReference type="InterPro" id="IPR013149">
    <property type="entry name" value="ADH-like_C"/>
</dbReference>
<dbReference type="InterPro" id="IPR013154">
    <property type="entry name" value="ADH-like_N"/>
</dbReference>
<dbReference type="InterPro" id="IPR045851">
    <property type="entry name" value="AMP-bd_C_sf"/>
</dbReference>
<dbReference type="InterPro" id="IPR020845">
    <property type="entry name" value="AMP-binding_CS"/>
</dbReference>
<dbReference type="InterPro" id="IPR000873">
    <property type="entry name" value="AMP-dep_synth/lig_dom"/>
</dbReference>
<dbReference type="InterPro" id="IPR042099">
    <property type="entry name" value="ANL_N_sf"/>
</dbReference>
<dbReference type="InterPro" id="IPR023213">
    <property type="entry name" value="CAT-like_dom_sf"/>
</dbReference>
<dbReference type="InterPro" id="IPR001242">
    <property type="entry name" value="Condensatn"/>
</dbReference>
<dbReference type="InterPro" id="IPR013120">
    <property type="entry name" value="Far_NAD-bd"/>
</dbReference>
<dbReference type="InterPro" id="IPR011032">
    <property type="entry name" value="GroES-like_sf"/>
</dbReference>
<dbReference type="InterPro" id="IPR018201">
    <property type="entry name" value="Ketoacyl_synth_AS"/>
</dbReference>
<dbReference type="InterPro" id="IPR014031">
    <property type="entry name" value="Ketoacyl_synth_C"/>
</dbReference>
<dbReference type="InterPro" id="IPR014030">
    <property type="entry name" value="Ketoacyl_synth_N"/>
</dbReference>
<dbReference type="InterPro" id="IPR016036">
    <property type="entry name" value="Malonyl_transacylase_ACP-bd"/>
</dbReference>
<dbReference type="InterPro" id="IPR036291">
    <property type="entry name" value="NAD(P)-bd_dom_sf"/>
</dbReference>
<dbReference type="InterPro" id="IPR032821">
    <property type="entry name" value="PKS_assoc"/>
</dbReference>
<dbReference type="InterPro" id="IPR020841">
    <property type="entry name" value="PKS_Beta-ketoAc_synthase_dom"/>
</dbReference>
<dbReference type="InterPro" id="IPR042104">
    <property type="entry name" value="PKS_dehydratase_sf"/>
</dbReference>
<dbReference type="InterPro" id="IPR020807">
    <property type="entry name" value="PKS_DH"/>
</dbReference>
<dbReference type="InterPro" id="IPR049551">
    <property type="entry name" value="PKS_DH_C"/>
</dbReference>
<dbReference type="InterPro" id="IPR049552">
    <property type="entry name" value="PKS_DH_N"/>
</dbReference>
<dbReference type="InterPro" id="IPR020843">
    <property type="entry name" value="PKS_ER"/>
</dbReference>
<dbReference type="InterPro" id="IPR013968">
    <property type="entry name" value="PKS_KR"/>
</dbReference>
<dbReference type="InterPro" id="IPR049900">
    <property type="entry name" value="PKS_mFAS_DH"/>
</dbReference>
<dbReference type="InterPro" id="IPR050091">
    <property type="entry name" value="PKS_NRPS_Biosynth_Enz"/>
</dbReference>
<dbReference type="InterPro" id="IPR020806">
    <property type="entry name" value="PKS_PP-bd"/>
</dbReference>
<dbReference type="InterPro" id="IPR009081">
    <property type="entry name" value="PP-bd_ACP"/>
</dbReference>
<dbReference type="InterPro" id="IPR016039">
    <property type="entry name" value="Thiolase-like"/>
</dbReference>
<dbReference type="NCBIfam" id="TIGR01733">
    <property type="entry name" value="AA-adenyl-dom"/>
    <property type="match status" value="1"/>
</dbReference>
<dbReference type="PANTHER" id="PTHR43775">
    <property type="entry name" value="FATTY ACID SYNTHASE"/>
    <property type="match status" value="1"/>
</dbReference>
<dbReference type="PANTHER" id="PTHR43775:SF37">
    <property type="entry name" value="SI:DKEY-61P9.11"/>
    <property type="match status" value="1"/>
</dbReference>
<dbReference type="Pfam" id="PF23297">
    <property type="entry name" value="ACP_SdgA_C"/>
    <property type="match status" value="1"/>
</dbReference>
<dbReference type="Pfam" id="PF00698">
    <property type="entry name" value="Acyl_transf_1"/>
    <property type="match status" value="1"/>
</dbReference>
<dbReference type="Pfam" id="PF08240">
    <property type="entry name" value="ADH_N"/>
    <property type="match status" value="1"/>
</dbReference>
<dbReference type="Pfam" id="PF00107">
    <property type="entry name" value="ADH_zinc_N"/>
    <property type="match status" value="1"/>
</dbReference>
<dbReference type="Pfam" id="PF00501">
    <property type="entry name" value="AMP-binding"/>
    <property type="match status" value="1"/>
</dbReference>
<dbReference type="Pfam" id="PF00668">
    <property type="entry name" value="Condensation"/>
    <property type="match status" value="1"/>
</dbReference>
<dbReference type="Pfam" id="PF16197">
    <property type="entry name" value="KAsynt_C_assoc"/>
    <property type="match status" value="1"/>
</dbReference>
<dbReference type="Pfam" id="PF00109">
    <property type="entry name" value="ketoacyl-synt"/>
    <property type="match status" value="1"/>
</dbReference>
<dbReference type="Pfam" id="PF02801">
    <property type="entry name" value="Ketoacyl-synt_C"/>
    <property type="match status" value="1"/>
</dbReference>
<dbReference type="Pfam" id="PF08659">
    <property type="entry name" value="KR"/>
    <property type="match status" value="1"/>
</dbReference>
<dbReference type="Pfam" id="PF07993">
    <property type="entry name" value="NAD_binding_4"/>
    <property type="match status" value="1"/>
</dbReference>
<dbReference type="Pfam" id="PF21089">
    <property type="entry name" value="PKS_DH_N"/>
    <property type="match status" value="1"/>
</dbReference>
<dbReference type="Pfam" id="PF00550">
    <property type="entry name" value="PP-binding"/>
    <property type="match status" value="1"/>
</dbReference>
<dbReference type="Pfam" id="PF14765">
    <property type="entry name" value="PS-DH"/>
    <property type="match status" value="1"/>
</dbReference>
<dbReference type="SMART" id="SM00827">
    <property type="entry name" value="PKS_AT"/>
    <property type="match status" value="1"/>
</dbReference>
<dbReference type="SMART" id="SM00826">
    <property type="entry name" value="PKS_DH"/>
    <property type="match status" value="1"/>
</dbReference>
<dbReference type="SMART" id="SM00829">
    <property type="entry name" value="PKS_ER"/>
    <property type="match status" value="1"/>
</dbReference>
<dbReference type="SMART" id="SM00822">
    <property type="entry name" value="PKS_KR"/>
    <property type="match status" value="1"/>
</dbReference>
<dbReference type="SMART" id="SM00825">
    <property type="entry name" value="PKS_KS"/>
    <property type="match status" value="1"/>
</dbReference>
<dbReference type="SMART" id="SM00823">
    <property type="entry name" value="PKS_PP"/>
    <property type="match status" value="2"/>
</dbReference>
<dbReference type="SUPFAM" id="SSF56801">
    <property type="entry name" value="Acetyl-CoA synthetase-like"/>
    <property type="match status" value="1"/>
</dbReference>
<dbReference type="SUPFAM" id="SSF47336">
    <property type="entry name" value="ACP-like"/>
    <property type="match status" value="2"/>
</dbReference>
<dbReference type="SUPFAM" id="SSF52777">
    <property type="entry name" value="CoA-dependent acyltransferases"/>
    <property type="match status" value="2"/>
</dbReference>
<dbReference type="SUPFAM" id="SSF52151">
    <property type="entry name" value="FabD/lysophospholipase-like"/>
    <property type="match status" value="1"/>
</dbReference>
<dbReference type="SUPFAM" id="SSF50129">
    <property type="entry name" value="GroES-like"/>
    <property type="match status" value="1"/>
</dbReference>
<dbReference type="SUPFAM" id="SSF51735">
    <property type="entry name" value="NAD(P)-binding Rossmann-fold domains"/>
    <property type="match status" value="4"/>
</dbReference>
<dbReference type="SUPFAM" id="SSF55048">
    <property type="entry name" value="Probable ACP-binding domain of malonyl-CoA ACP transacylase"/>
    <property type="match status" value="1"/>
</dbReference>
<dbReference type="SUPFAM" id="SSF53901">
    <property type="entry name" value="Thiolase-like"/>
    <property type="match status" value="1"/>
</dbReference>
<dbReference type="PROSITE" id="PS00455">
    <property type="entry name" value="AMP_BINDING"/>
    <property type="match status" value="1"/>
</dbReference>
<dbReference type="PROSITE" id="PS50075">
    <property type="entry name" value="CARRIER"/>
    <property type="match status" value="2"/>
</dbReference>
<dbReference type="PROSITE" id="PS00606">
    <property type="entry name" value="KS3_1"/>
    <property type="match status" value="1"/>
</dbReference>
<dbReference type="PROSITE" id="PS52004">
    <property type="entry name" value="KS3_2"/>
    <property type="match status" value="1"/>
</dbReference>
<dbReference type="PROSITE" id="PS52019">
    <property type="entry name" value="PKS_MFAS_DH"/>
    <property type="match status" value="1"/>
</dbReference>
<protein>
    <recommendedName>
        <fullName evidence="8">Hybrid PKS-NRPS synthetase pyvA</fullName>
        <ecNumber evidence="7">2.3.1.-</ecNumber>
        <ecNumber evidence="7">6.3.2.-</ecNumber>
    </recommendedName>
    <alternativeName>
        <fullName evidence="8">Pyranoviolin A biosynthesis cluster protein A</fullName>
    </alternativeName>
</protein>
<sequence>MDPQQRLLLEVVFEAFEDAGISLEEMNGSRTSVLCGAFTNDYNAMLTKDLEYYPKYTVTGTGNAILANRISYAFNLKGMSLTIDTACSSSLVGFHLGAQAILNGDCEMAIIVGSALHFDPNIFITMTDLGMLSQEGRCRAFDAGGKGYARGEGICAVILRGQMQAEMHGDHIRALVRATGSNHDGMTQGITLPSSEAQEALIRRTYQSCGLDPADTQYVEAHGTGTARGDPLEMRAIGACFSSPRRSDPLYVGSVKSNIGHAEGASGLAGLIKASMALEKGQIPPNMHFKHPNPEIAFADWQIEVPTRVIDFPSNAQGTRRVSINSFGYGGSNAHVILESYDQLPHVQPTDPGAHRPYLVPLTSHTEKAGKLMVEKLGAYLDDRPSTLVVDLAHSLATRRTLHDERSFAVGASAADIRTQLSEGLPAWTKVRREPVRLGFVFTGQGAQWHAMGRQLLEQCPFFRHTLERADRILATLPDKPEWSIVTELTQPKETSRLGETRLSQPICTALQLAILDLLKSWGIVPQATVGHSSGEVAGAYAAGILTFENAMYAAYYRGLHMSSPRSSTSPGRDAIPGAMLAVGLGEAEAMAETESYRGRAVVAAVNSPSSVTLSGDADAIAEIKERLDAQKVFARRLQVQQAFHSHHMDPLAPAYEEALRNCPGFAATAPACRFFSSVTARVANPDTMGPQYWSANMTGTVRFSDALIGVLLDDLEDPNVDALVEIGPHPALKGPARQVMKSVNMDLPYFASLSRGVPDYEGILALAGQLFQLGYPVDLTAVNSDTYLADSDPPRQTHRAQRIPDLPLYAWDHSDRYWAETRLIKEHRLRPHHHPILGAKMPGSIEGHVRWRNYLRTRELPWLVDHMVDNKVTFPAAGYVTLAIEAALRMKDTVMAAQGVSLRNLSIKSALVLDESEMGSEVVVDIRPQTTSAKSRSDTWLEFTIFSYNGSLTCAEHCTGLISISTATTADGAPSRKPYRQHPQPQPGRMSTASFPAQSFYTHLRQLGLQYGEHFQLLTGTIESGAGFSSSMLTFEPAQYAAQPADRTVVHPTMLDAAFHTIFAALEGLSGRTLQTAFVPTFVHSLDIFPAMLSGMDAPRPLEARVASSAHFSGPRAAVSDVDMYRQGDGEALLSLAGLRLTSLSNGRAAHNRSLFFRTRWQPAFDQLAEDSPALQDQTLAGVLDLFLHQHPDTKILHFTPDINQTRQLVGCLVDQGSERRRFRSITPVATGGAFAEELERVQREQPGCLVTGEPEPEAYDLVIVSEAQEAHPLPFLRDGGYVISHGSAIDETNLTKRFQCADVEVWQRTRETRRDVRPLLLAMAPTPSRRTLDLASHIRAANPDRPVSCLGLQELLARMTGVEDVVVLASLDRDLLSGLDPQGELFFEATRALLIRPDVNVLWLLQDTTAPRHVDSLGSSMIVGLARTARSENPSSRIVTLDLPVDWSPAAVVPWLPQLLDPEVHEDEFHLRDQVLSIPRIENDDGLNSKVPGGVSSGPRPESFSAQRPMRLAIGQAGLLETLVWEDDVEILNEPLPDDEIEIEVKASALNFRDVAAAMGIIDDHRLGDECAGLVRRVGQQVDPAAFQPGDRVVALRPGRGAHRSVVRNPACHCFRLGPMPFEQATALPLILTTAYYSLVETARLQPGETVLIHCAAGGVGQMAIQIAQQIGARIIATVGSPAKRDLLQSRYGLTEAHILSSRDASFVDGVMQLTGGRGVDVVLNSLSGKLLHASWNSLATFGRFIEIGKRDIHENTLIEMDPFRRNVLFASVDMVTIYAQNRALGARIFDHCCNMVHEGRIQLPATILALPYSEAVQGFRLLQMGRHTGKVVLVAEDQGDQVPVSPPTWNAVANRLSPDKTYLLVGGLGGLGRTLTEWLVQRQAKRIAFLSRSGADRPEAQATVAWLRARGIAVSVHAADVADPGHVQACIKAIPDLGGVFHAAMVLADAPLERMSYAQWHRCVQPKVRGAYNLHCATVHCPLDFFVCFSSISAFFGSKAQANYAAANVYLDSLVRYRRQLGLPASSMNCGRITGVGVAAADASLERFMVEEGFDGVNRQELLYQIEEAIFSADHPAPLSGRGTDMSQTLTGVTLERDDVYWAQRSIFRNLYRNHDVEGQSRPGADEVNLSVQLARTIDLSDRVALLMERFVDKVSVVLGLSPESLKPADPVYGLDSLVAVELRNWFTKSVGVDIALFDVLGSPSIQALVEKAIGLFDAQVQQQQQQQQSVQSSSAPSNDDQSPTFNKNLDSQDPSTSLQIPKADCSRPLPMSTFQNRLWVSHRFAADKSRINLAITMHLRGQADHGILEQALSELIARNPILRTAYGEGEAQDEQRVMAPRPFHLGFHDLSKSGPSEGPTASLETLVGSLKRKEMRIEEGEVLEATLVQRSSTECALVLIMHHICTDRSNSQSFVRQLAALYDALRQGRSLSTIPAPKVTYADFTLWHNQLLTSPSMGKGVEYWKQTLAGMPASCQLLPFAKGERPSWDEYGRETVVAALSARQLQRMKRICSQARTSPFHFLLAAFRAFLHRYTADEDLTILMVDGNRPHADLGEVLGFFVNMAPIRCRDACAGSFETLLKTIGGRVLEAMAHSHVPFDVIVAQTQGARTPAHFPVSQVLVNYQQPDEQARYQTTDFTFQGTEVQNMPTGCELSLQAREDAEHGLQLELEYATALYEDGDMRCFFDNFQTFVTSLIQDHRQSIPEVRLAGTLELERLALHCWNSHPPDHGWQPLNLPRRIVEVAETQPRAIAITTSAGEAVTYQDLVASARRVAFSLQNLGIGPGQVVGILASPGIELVTAMLGALFNRCGYVPLDPTMAVGRLAYIVGDSGMQLLLVDEESDPLASSLGRESPSLPNVMSIKNATRAAWPADLPRSLPTDPFYMMYTSGSTGTPKGVPLTQENVGEMLAAMQARFNFTREDRFLHQISPSFDLSVVELFSPLCVGAKLCIATKTTRSDPRLLGDYLRQASVTVTYFTPTQFALVLEHSGASLVACPDYRIALLCGERLPTRLAEAFHQLACAATLYNAWGPTEAAVQTTIHRVQWPADQTLNIPIGHAVGSCRHYIVDAAMNPLPVGFVGEICIGGPQVARGYWNRAESNRQQFLRNPFASPDDHRRGWTRLFRTGDLGRFLPDGQLEFLGRIAGDKQIKLRGFRIDLGEIEHVLHRHSGTPDGQGIVDLAVIAQSAPEDADALTDDRWLVAFIVPKQAIPTEAAKRAYATLLHTRAKPYLNRYMLPAAYQFVDQLPTTASGKTDRRALGASQAPGTPPQHGAGPAAASTLDPAQAQAQDRADEEVGDRTMATVTRVWQEVLRLDHDIPVEPTSNFFDMGGSSTLLLRLQGKLQTTLSIPISLQEMVRRPTLVQLVELVHSKVPREGQPPPTPGSRPEEDVVDWAQETTLPAETRYHPPSAPMSPGGRDILMTGAESFTGIHLLAQLLTSHPSGTIHLLGTHHPWDHAQVFQRLQEYNLLNATLTPEQILTRLRTIPGSLAEGSHFGLSPRAFEALGRSIATIYHLASEVSLLKTYHDLKPINTAAILPLIELARWGGPSPIHYLSTWSVPHLQLWTAPPTTPAVVHEASAGHFTPPPTADQGYFKSRWAAEMLLTHAAARGFPVTIYRASAVTGNPTTGLPAPAGDFVRSLILDMLRHRLVPRFARESPAPVVVDLVPVNYLTALLAHLAQRPRAAAAEGPRPAGVEIFHLTNPTPLPLDQLPGLTGSIRGDATAGRVVSVDDWLAAVSGSDPAAAAADEDEQLRVQVAGGYFRRGHQMFALDRRRTDAALGGVTEGWVDCPPVDANYLRALWLQKV</sequence>
<feature type="chain" id="PRO_0000452816" description="Hybrid PKS-NRPS synthetase pyvA">
    <location>
        <begin position="1"/>
        <end position="3814"/>
    </location>
</feature>
<feature type="domain" description="Ketosynthase family 3 (KS3)" evidence="3 10">
    <location>
        <begin position="1"/>
        <end position="340"/>
    </location>
</feature>
<feature type="domain" description="PKS/mFAS DH" evidence="4">
    <location>
        <begin position="835"/>
        <end position="1151"/>
    </location>
</feature>
<feature type="domain" description="Carrier 1" evidence="2">
    <location>
        <begin position="2141"/>
        <end position="2220"/>
    </location>
</feature>
<feature type="domain" description="Carrier 2" evidence="2">
    <location>
        <begin position="3304"/>
        <end position="3379"/>
    </location>
</feature>
<feature type="region of interest" description="Malonyl-CoA:ACP transacylase (MAT) domain" evidence="1 10">
    <location>
        <begin position="441"/>
        <end position="758"/>
    </location>
</feature>
<feature type="region of interest" description="Dehydratase (DH) domain" evidence="1 10">
    <location>
        <begin position="835"/>
        <end position="1149"/>
    </location>
</feature>
<feature type="region of interest" description="N-terminal hotdog fold" evidence="4">
    <location>
        <begin position="835"/>
        <end position="970"/>
    </location>
</feature>
<feature type="region of interest" description="Disordered" evidence="6">
    <location>
        <begin position="970"/>
        <end position="993"/>
    </location>
</feature>
<feature type="region of interest" description="C-terminal hotdog fold" evidence="4">
    <location>
        <begin position="991"/>
        <end position="1151"/>
    </location>
</feature>
<feature type="region of interest" description="Enoyl reductase (ER) domain" evidence="1 10">
    <location>
        <begin position="1520"/>
        <end position="1836"/>
    </location>
</feature>
<feature type="region of interest" description="Ketoreductase (KR) domain" evidence="1 10">
    <location>
        <begin position="1864"/>
        <end position="2036"/>
    </location>
</feature>
<feature type="region of interest" description="Disordered" evidence="6">
    <location>
        <begin position="2228"/>
        <end position="2270"/>
    </location>
</feature>
<feature type="region of interest" description="Condensation (C) domain 7" evidence="1 10">
    <location>
        <begin position="2273"/>
        <end position="2718"/>
    </location>
</feature>
<feature type="region of interest" description="Adenylation (A) domain 8" evidence="1 10">
    <location>
        <begin position="2738"/>
        <end position="3149"/>
    </location>
</feature>
<feature type="region of interest" description="Disordered" evidence="6">
    <location>
        <begin position="3257"/>
        <end position="3304"/>
    </location>
</feature>
<feature type="region of interest" description="Thioesterase (TE) domain" evidence="1 10">
    <location>
        <begin position="3428"/>
        <end position="3680"/>
    </location>
</feature>
<feature type="compositionally biased region" description="Low complexity" evidence="6">
    <location>
        <begin position="2228"/>
        <end position="2238"/>
    </location>
</feature>
<feature type="compositionally biased region" description="Polar residues" evidence="6">
    <location>
        <begin position="2239"/>
        <end position="2263"/>
    </location>
</feature>
<feature type="active site" description="For beta-ketoacyl synthase activity" evidence="3">
    <location>
        <position position="87"/>
    </location>
</feature>
<feature type="active site" description="For beta-ketoacyl synthase activity" evidence="3">
    <location>
        <position position="222"/>
    </location>
</feature>
<feature type="active site" description="For beta-ketoacyl synthase activity" evidence="3">
    <location>
        <position position="261"/>
    </location>
</feature>
<feature type="active site" description="For malonyltransferase activity" evidence="5">
    <location>
        <position position="533"/>
    </location>
</feature>
<feature type="active site" description="Proton acceptor; for dehydratase activity" evidence="4">
    <location>
        <position position="867"/>
    </location>
</feature>
<feature type="active site" description="Proton donor; for dehydratase activity" evidence="4">
    <location>
        <position position="1057"/>
    </location>
</feature>
<feature type="modified residue" description="O-(pantetheine 4'-phosphoryl)serine" evidence="2">
    <location>
        <position position="2180"/>
    </location>
</feature>
<feature type="modified residue" description="O-(pantetheine 4'-phosphoryl)serine" evidence="2">
    <location>
        <position position="3339"/>
    </location>
</feature>